<organism>
    <name type="scientific">Francisella tularensis subsp. tularensis (strain SCHU S4 / Schu 4)</name>
    <dbReference type="NCBI Taxonomy" id="177416"/>
    <lineage>
        <taxon>Bacteria</taxon>
        <taxon>Pseudomonadati</taxon>
        <taxon>Pseudomonadota</taxon>
        <taxon>Gammaproteobacteria</taxon>
        <taxon>Thiotrichales</taxon>
        <taxon>Francisellaceae</taxon>
        <taxon>Francisella</taxon>
    </lineage>
</organism>
<evidence type="ECO:0000255" key="1">
    <source>
        <dbReference type="HAMAP-Rule" id="MF_00041"/>
    </source>
</evidence>
<gene>
    <name evidence="1" type="primary">cysS</name>
    <name type="ordered locus">FTT_1616</name>
</gene>
<comment type="catalytic activity">
    <reaction evidence="1">
        <text>tRNA(Cys) + L-cysteine + ATP = L-cysteinyl-tRNA(Cys) + AMP + diphosphate</text>
        <dbReference type="Rhea" id="RHEA:17773"/>
        <dbReference type="Rhea" id="RHEA-COMP:9661"/>
        <dbReference type="Rhea" id="RHEA-COMP:9679"/>
        <dbReference type="ChEBI" id="CHEBI:30616"/>
        <dbReference type="ChEBI" id="CHEBI:33019"/>
        <dbReference type="ChEBI" id="CHEBI:35235"/>
        <dbReference type="ChEBI" id="CHEBI:78442"/>
        <dbReference type="ChEBI" id="CHEBI:78517"/>
        <dbReference type="ChEBI" id="CHEBI:456215"/>
        <dbReference type="EC" id="6.1.1.16"/>
    </reaction>
</comment>
<comment type="cofactor">
    <cofactor evidence="1">
        <name>Zn(2+)</name>
        <dbReference type="ChEBI" id="CHEBI:29105"/>
    </cofactor>
    <text evidence="1">Binds 1 zinc ion per subunit.</text>
</comment>
<comment type="subunit">
    <text evidence="1">Monomer.</text>
</comment>
<comment type="subcellular location">
    <subcellularLocation>
        <location evidence="1">Cytoplasm</location>
    </subcellularLocation>
</comment>
<comment type="similarity">
    <text evidence="1">Belongs to the class-I aminoacyl-tRNA synthetase family.</text>
</comment>
<feature type="chain" id="PRO_0000159399" description="Cysteine--tRNA ligase">
    <location>
        <begin position="1"/>
        <end position="464"/>
    </location>
</feature>
<feature type="short sequence motif" description="'HIGH' region">
    <location>
        <begin position="34"/>
        <end position="44"/>
    </location>
</feature>
<feature type="short sequence motif" description="'KMSKS' region">
    <location>
        <begin position="270"/>
        <end position="274"/>
    </location>
</feature>
<feature type="binding site" evidence="1">
    <location>
        <position position="32"/>
    </location>
    <ligand>
        <name>Zn(2+)</name>
        <dbReference type="ChEBI" id="CHEBI:29105"/>
    </ligand>
</feature>
<feature type="binding site" evidence="1">
    <location>
        <position position="213"/>
    </location>
    <ligand>
        <name>Zn(2+)</name>
        <dbReference type="ChEBI" id="CHEBI:29105"/>
    </ligand>
</feature>
<feature type="binding site" evidence="1">
    <location>
        <position position="238"/>
    </location>
    <ligand>
        <name>Zn(2+)</name>
        <dbReference type="ChEBI" id="CHEBI:29105"/>
    </ligand>
</feature>
<feature type="binding site" evidence="1">
    <location>
        <position position="242"/>
    </location>
    <ligand>
        <name>Zn(2+)</name>
        <dbReference type="ChEBI" id="CHEBI:29105"/>
    </ligand>
</feature>
<feature type="binding site" evidence="1">
    <location>
        <position position="273"/>
    </location>
    <ligand>
        <name>ATP</name>
        <dbReference type="ChEBI" id="CHEBI:30616"/>
    </ligand>
</feature>
<dbReference type="EC" id="6.1.1.16" evidence="1"/>
<dbReference type="EMBL" id="AJ749949">
    <property type="protein sequence ID" value="CAG46249.1"/>
    <property type="molecule type" value="Genomic_DNA"/>
</dbReference>
<dbReference type="RefSeq" id="WP_003022540.1">
    <property type="nucleotide sequence ID" value="NC_006570.2"/>
</dbReference>
<dbReference type="RefSeq" id="YP_170531.1">
    <property type="nucleotide sequence ID" value="NC_006570.2"/>
</dbReference>
<dbReference type="SMR" id="Q5NEL1"/>
<dbReference type="IntAct" id="Q5NEL1">
    <property type="interactions" value="2"/>
</dbReference>
<dbReference type="STRING" id="177416.FTT_1616"/>
<dbReference type="DNASU" id="3192385"/>
<dbReference type="EnsemblBacteria" id="CAG46249">
    <property type="protein sequence ID" value="CAG46249"/>
    <property type="gene ID" value="FTT_1616"/>
</dbReference>
<dbReference type="KEGG" id="ftu:FTT_1616"/>
<dbReference type="eggNOG" id="COG0215">
    <property type="taxonomic scope" value="Bacteria"/>
</dbReference>
<dbReference type="OrthoDB" id="9815130at2"/>
<dbReference type="Proteomes" id="UP000001174">
    <property type="component" value="Chromosome"/>
</dbReference>
<dbReference type="GO" id="GO:0005829">
    <property type="term" value="C:cytosol"/>
    <property type="evidence" value="ECO:0007669"/>
    <property type="project" value="TreeGrafter"/>
</dbReference>
<dbReference type="GO" id="GO:0005524">
    <property type="term" value="F:ATP binding"/>
    <property type="evidence" value="ECO:0007669"/>
    <property type="project" value="UniProtKB-UniRule"/>
</dbReference>
<dbReference type="GO" id="GO:0004817">
    <property type="term" value="F:cysteine-tRNA ligase activity"/>
    <property type="evidence" value="ECO:0007669"/>
    <property type="project" value="UniProtKB-UniRule"/>
</dbReference>
<dbReference type="GO" id="GO:0008270">
    <property type="term" value="F:zinc ion binding"/>
    <property type="evidence" value="ECO:0007669"/>
    <property type="project" value="UniProtKB-UniRule"/>
</dbReference>
<dbReference type="GO" id="GO:0006423">
    <property type="term" value="P:cysteinyl-tRNA aminoacylation"/>
    <property type="evidence" value="ECO:0007669"/>
    <property type="project" value="UniProtKB-UniRule"/>
</dbReference>
<dbReference type="CDD" id="cd07963">
    <property type="entry name" value="Anticodon_Ia_Cys"/>
    <property type="match status" value="1"/>
</dbReference>
<dbReference type="CDD" id="cd00672">
    <property type="entry name" value="CysRS_core"/>
    <property type="match status" value="1"/>
</dbReference>
<dbReference type="FunFam" id="3.40.50.620:FF:000009">
    <property type="entry name" value="Cysteine--tRNA ligase"/>
    <property type="match status" value="1"/>
</dbReference>
<dbReference type="Gene3D" id="1.20.120.1910">
    <property type="entry name" value="Cysteine-tRNA ligase, C-terminal anti-codon recognition domain"/>
    <property type="match status" value="1"/>
</dbReference>
<dbReference type="Gene3D" id="3.40.50.620">
    <property type="entry name" value="HUPs"/>
    <property type="match status" value="1"/>
</dbReference>
<dbReference type="HAMAP" id="MF_00041">
    <property type="entry name" value="Cys_tRNA_synth"/>
    <property type="match status" value="1"/>
</dbReference>
<dbReference type="InterPro" id="IPR015803">
    <property type="entry name" value="Cys-tRNA-ligase"/>
</dbReference>
<dbReference type="InterPro" id="IPR015273">
    <property type="entry name" value="Cys-tRNA-synt_Ia_DALR"/>
</dbReference>
<dbReference type="InterPro" id="IPR024909">
    <property type="entry name" value="Cys-tRNA/MSH_ligase"/>
</dbReference>
<dbReference type="InterPro" id="IPR056411">
    <property type="entry name" value="CysS_C"/>
</dbReference>
<dbReference type="InterPro" id="IPR014729">
    <property type="entry name" value="Rossmann-like_a/b/a_fold"/>
</dbReference>
<dbReference type="InterPro" id="IPR032678">
    <property type="entry name" value="tRNA-synt_1_cat_dom"/>
</dbReference>
<dbReference type="InterPro" id="IPR009080">
    <property type="entry name" value="tRNAsynth_Ia_anticodon-bd"/>
</dbReference>
<dbReference type="NCBIfam" id="TIGR00435">
    <property type="entry name" value="cysS"/>
    <property type="match status" value="1"/>
</dbReference>
<dbReference type="PANTHER" id="PTHR10890:SF3">
    <property type="entry name" value="CYSTEINE--TRNA LIGASE, CYTOPLASMIC"/>
    <property type="match status" value="1"/>
</dbReference>
<dbReference type="PANTHER" id="PTHR10890">
    <property type="entry name" value="CYSTEINYL-TRNA SYNTHETASE"/>
    <property type="match status" value="1"/>
</dbReference>
<dbReference type="Pfam" id="PF23493">
    <property type="entry name" value="CysS_C"/>
    <property type="match status" value="1"/>
</dbReference>
<dbReference type="Pfam" id="PF09190">
    <property type="entry name" value="DALR_2"/>
    <property type="match status" value="1"/>
</dbReference>
<dbReference type="Pfam" id="PF01406">
    <property type="entry name" value="tRNA-synt_1e"/>
    <property type="match status" value="1"/>
</dbReference>
<dbReference type="PRINTS" id="PR00983">
    <property type="entry name" value="TRNASYNTHCYS"/>
</dbReference>
<dbReference type="SMART" id="SM00840">
    <property type="entry name" value="DALR_2"/>
    <property type="match status" value="1"/>
</dbReference>
<dbReference type="SUPFAM" id="SSF47323">
    <property type="entry name" value="Anticodon-binding domain of a subclass of class I aminoacyl-tRNA synthetases"/>
    <property type="match status" value="1"/>
</dbReference>
<dbReference type="SUPFAM" id="SSF52374">
    <property type="entry name" value="Nucleotidylyl transferase"/>
    <property type="match status" value="1"/>
</dbReference>
<reference key="1">
    <citation type="journal article" date="2005" name="Nat. Genet.">
        <title>The complete genome sequence of Francisella tularensis, the causative agent of tularemia.</title>
        <authorList>
            <person name="Larsson P."/>
            <person name="Oyston P.C.F."/>
            <person name="Chain P."/>
            <person name="Chu M.C."/>
            <person name="Duffield M."/>
            <person name="Fuxelius H.-H."/>
            <person name="Garcia E."/>
            <person name="Haelltorp G."/>
            <person name="Johansson D."/>
            <person name="Isherwood K.E."/>
            <person name="Karp P.D."/>
            <person name="Larsson E."/>
            <person name="Liu Y."/>
            <person name="Michell S."/>
            <person name="Prior J."/>
            <person name="Prior R."/>
            <person name="Malfatti S."/>
            <person name="Sjoestedt A."/>
            <person name="Svensson K."/>
            <person name="Thompson N."/>
            <person name="Vergez L."/>
            <person name="Wagg J.K."/>
            <person name="Wren B.W."/>
            <person name="Lindler L.E."/>
            <person name="Andersson S.G.E."/>
            <person name="Forsman M."/>
            <person name="Titball R.W."/>
        </authorList>
    </citation>
    <scope>NUCLEOTIDE SEQUENCE [LARGE SCALE GENOMIC DNA]</scope>
    <source>
        <strain>SCHU S4 / Schu 4</strain>
    </source>
</reference>
<keyword id="KW-0030">Aminoacyl-tRNA synthetase</keyword>
<keyword id="KW-0067">ATP-binding</keyword>
<keyword id="KW-0963">Cytoplasm</keyword>
<keyword id="KW-0436">Ligase</keyword>
<keyword id="KW-0479">Metal-binding</keyword>
<keyword id="KW-0547">Nucleotide-binding</keyword>
<keyword id="KW-0648">Protein biosynthesis</keyword>
<keyword id="KW-1185">Reference proteome</keyword>
<keyword id="KW-0862">Zinc</keyword>
<protein>
    <recommendedName>
        <fullName evidence="1">Cysteine--tRNA ligase</fullName>
        <ecNumber evidence="1">6.1.1.16</ecNumber>
    </recommendedName>
    <alternativeName>
        <fullName evidence="1">Cysteinyl-tRNA synthetase</fullName>
        <shortName evidence="1">CysRS</shortName>
    </alternativeName>
</protein>
<name>SYC_FRATT</name>
<accession>Q5NEL1</accession>
<sequence length="464" mass="53134">MDFCFMIFYNSLSGQKEQFKPIEANKIKMYACGVTVYDDCHIGHARTYIAFDVINRYFKYRGYDVTLVRNITDIDDKIIKRANENGESTTELVERNIKAMHDVFARLNILKPSKEPRATETIPEMVAMIETLIKKGYAYQGANSDVFYRVTKFADYGKLSKQNLEALQQGSRVDVVEEKENPMDFVLWKMAKEGEPAWDSPWGAGRPGWHIECSAMSKKLLGDTFDIHAGGSDLRFPHHENEIAQSEACNECTFANYWLHSGMVKVNAEKMSKSLNNFFTIVEVLEEYHPEVVRYFLASTVYRSEINYSKENLENAKASVERLFNALRDIEPIEVNLPDDASEYEEKFIKAMDNDFNTPEALAVLFSLAKEINTLKTTNKYKASGYAYLLRKLCDVLGILFTDIEEYFKQGDGADASEIEKLIAERTQAKKDKNYVRADEIRNQLQQQGIILEDSATGTTWKKG</sequence>
<proteinExistence type="inferred from homology"/>